<protein>
    <recommendedName>
        <fullName evidence="2">Putative 2'-deoxynucleoside 5'-phosphate N-hydrolase 1</fullName>
        <ecNumber evidence="2">3.2.2.-</ecNumber>
    </recommendedName>
</protein>
<name>DNPH1_SYNC1</name>
<proteinExistence type="inferred from homology"/>
<gene>
    <name type="ordered locus">Pcar_0779</name>
</gene>
<organism>
    <name type="scientific">Syntrophotalea carbinolica (strain DSM 2380 / NBRC 103641 / GraBd1)</name>
    <name type="common">Pelobacter carbinolicus</name>
    <dbReference type="NCBI Taxonomy" id="338963"/>
    <lineage>
        <taxon>Bacteria</taxon>
        <taxon>Pseudomonadati</taxon>
        <taxon>Thermodesulfobacteriota</taxon>
        <taxon>Desulfuromonadia</taxon>
        <taxon>Desulfuromonadales</taxon>
        <taxon>Syntrophotaleaceae</taxon>
        <taxon>Syntrophotalea</taxon>
    </lineage>
</organism>
<dbReference type="EC" id="3.2.2.-" evidence="2"/>
<dbReference type="EMBL" id="CP000142">
    <property type="protein sequence ID" value="ABA88038.1"/>
    <property type="molecule type" value="Genomic_DNA"/>
</dbReference>
<dbReference type="RefSeq" id="WP_011340487.1">
    <property type="nucleotide sequence ID" value="NC_007498.2"/>
</dbReference>
<dbReference type="SMR" id="Q3A6G9"/>
<dbReference type="STRING" id="338963.Pcar_0779"/>
<dbReference type="KEGG" id="pca:Pcar_0779"/>
<dbReference type="eggNOG" id="COG3613">
    <property type="taxonomic scope" value="Bacteria"/>
</dbReference>
<dbReference type="HOGENOM" id="CLU_100069_1_0_7"/>
<dbReference type="OrthoDB" id="9811273at2"/>
<dbReference type="Proteomes" id="UP000002534">
    <property type="component" value="Chromosome"/>
</dbReference>
<dbReference type="GO" id="GO:0070694">
    <property type="term" value="F:5-hydroxymethyl-dUMP N-hydrolase activity"/>
    <property type="evidence" value="ECO:0000250"/>
    <property type="project" value="UniProtKB"/>
</dbReference>
<dbReference type="GO" id="GO:0009159">
    <property type="term" value="P:deoxyribonucleoside monophosphate catabolic process"/>
    <property type="evidence" value="ECO:0000250"/>
    <property type="project" value="UniProtKB"/>
</dbReference>
<dbReference type="GO" id="GO:0009116">
    <property type="term" value="P:nucleoside metabolic process"/>
    <property type="evidence" value="ECO:0007669"/>
    <property type="project" value="UniProtKB-UniRule"/>
</dbReference>
<dbReference type="GO" id="GO:0009117">
    <property type="term" value="P:nucleotide metabolic process"/>
    <property type="evidence" value="ECO:0007669"/>
    <property type="project" value="UniProtKB-KW"/>
</dbReference>
<dbReference type="Gene3D" id="3.40.50.450">
    <property type="match status" value="1"/>
</dbReference>
<dbReference type="HAMAP" id="MF_03036">
    <property type="entry name" value="Nuc_phosphate_hydrolase"/>
    <property type="match status" value="1"/>
</dbReference>
<dbReference type="InterPro" id="IPR051239">
    <property type="entry name" value="2'-dNMP_N-hydrolase"/>
</dbReference>
<dbReference type="InterPro" id="IPR028607">
    <property type="entry name" value="DNPH1"/>
</dbReference>
<dbReference type="InterPro" id="IPR007710">
    <property type="entry name" value="Nucleoside_deoxyribTrfase"/>
</dbReference>
<dbReference type="PANTHER" id="PTHR15364">
    <property type="entry name" value="2'-DEOXYNUCLEOSIDE 5'-PHOSPHATE N-HYDROLASE 1"/>
    <property type="match status" value="1"/>
</dbReference>
<dbReference type="PANTHER" id="PTHR15364:SF0">
    <property type="entry name" value="2'-DEOXYNUCLEOSIDE 5'-PHOSPHATE N-HYDROLASE 1"/>
    <property type="match status" value="1"/>
</dbReference>
<dbReference type="Pfam" id="PF05014">
    <property type="entry name" value="Nuc_deoxyrib_tr"/>
    <property type="match status" value="1"/>
</dbReference>
<dbReference type="SUPFAM" id="SSF52309">
    <property type="entry name" value="N-(deoxy)ribosyltransferase-like"/>
    <property type="match status" value="1"/>
</dbReference>
<evidence type="ECO:0000250" key="1">
    <source>
        <dbReference type="UniProtKB" id="O35820"/>
    </source>
</evidence>
<evidence type="ECO:0000255" key="2">
    <source>
        <dbReference type="HAMAP-Rule" id="MF_03036"/>
    </source>
</evidence>
<feature type="chain" id="PRO_0000379464" description="Putative 2'-deoxynucleoside 5'-phosphate N-hydrolase 1">
    <location>
        <begin position="1"/>
        <end position="142"/>
    </location>
</feature>
<feature type="binding site" description="in other chain" evidence="2">
    <location>
        <begin position="4"/>
        <end position="10"/>
    </location>
    <ligand>
        <name>substrate</name>
        <note>ligand shared between homodimeric partners</note>
    </ligand>
</feature>
<feature type="binding site" description="in other chain" evidence="2">
    <location>
        <position position="19"/>
    </location>
    <ligand>
        <name>substrate</name>
        <note>ligand shared between homodimeric partners</note>
    </ligand>
</feature>
<feature type="binding site" description="in other chain" evidence="1">
    <location>
        <position position="36"/>
    </location>
    <ligand>
        <name>substrate</name>
        <note>ligand shared between homodimeric partners</note>
    </ligand>
</feature>
<feature type="binding site" description="in other chain" evidence="2">
    <location>
        <position position="82"/>
    </location>
    <ligand>
        <name>substrate</name>
        <note>ligand shared between homodimeric partners</note>
    </ligand>
</feature>
<feature type="binding site" evidence="2">
    <location>
        <begin position="106"/>
        <end position="108"/>
    </location>
    <ligand>
        <name>substrate</name>
        <note>ligand shared between homodimeric partners</note>
    </ligand>
</feature>
<accession>Q3A6G9</accession>
<sequence>MKIFFSGSIRGGNKYRRQYGQILAFLQAFGETISEHSDRPEAFDDGGLKGDAAIYARDTHWIREADLLVAEVSQPSIGVGYEIAYAEARNIPILALYHVGAESPMSAMVFGNPKITSIRYDSLSELWPVLKDTLAETHLPPK</sequence>
<reference key="1">
    <citation type="submission" date="2005-10" db="EMBL/GenBank/DDBJ databases">
        <title>Complete sequence of Pelobacter carbinolicus DSM 2380.</title>
        <authorList>
            <person name="Copeland A."/>
            <person name="Lucas S."/>
            <person name="Lapidus A."/>
            <person name="Barry K."/>
            <person name="Detter J.C."/>
            <person name="Glavina T."/>
            <person name="Hammon N."/>
            <person name="Israni S."/>
            <person name="Pitluck S."/>
            <person name="Chertkov O."/>
            <person name="Schmutz J."/>
            <person name="Larimer F."/>
            <person name="Land M."/>
            <person name="Kyrpides N."/>
            <person name="Ivanova N."/>
            <person name="Richardson P."/>
        </authorList>
    </citation>
    <scope>NUCLEOTIDE SEQUENCE [LARGE SCALE GENOMIC DNA]</scope>
    <source>
        <strain>DSM 2380 / NBRC 103641 / GraBd1</strain>
    </source>
</reference>
<keyword id="KW-0326">Glycosidase</keyword>
<keyword id="KW-0378">Hydrolase</keyword>
<keyword id="KW-0546">Nucleotide metabolism</keyword>
<keyword id="KW-1185">Reference proteome</keyword>
<comment type="function">
    <text evidence="2">Catalyzes the cleavage of the N-glycosidic bond of deoxyribonucleoside 5'-monophosphates to yield deoxyribose 5-phosphate and a purine or pyrimidine base.</text>
</comment>
<comment type="catalytic activity">
    <reaction evidence="2">
        <text>a pyrimidine 2'-deoxyribonucleoside 5'-phosphate + H2O = a pyrimidine nucleobase + 2-deoxy-D-ribose 5-phosphate</text>
        <dbReference type="Rhea" id="RHEA:57852"/>
        <dbReference type="ChEBI" id="CHEBI:15377"/>
        <dbReference type="ChEBI" id="CHEBI:26432"/>
        <dbReference type="ChEBI" id="CHEBI:62877"/>
        <dbReference type="ChEBI" id="CHEBI:142209"/>
    </reaction>
</comment>
<comment type="catalytic activity">
    <reaction evidence="2">
        <text>a purine 2'-deoxyribonucleoside 5'-phosphate + H2O = a purine nucleobase + 2-deoxy-D-ribose 5-phosphate</text>
        <dbReference type="Rhea" id="RHEA:51132"/>
        <dbReference type="ChEBI" id="CHEBI:15377"/>
        <dbReference type="ChEBI" id="CHEBI:26386"/>
        <dbReference type="ChEBI" id="CHEBI:62877"/>
        <dbReference type="ChEBI" id="CHEBI:142198"/>
    </reaction>
</comment>
<comment type="subunit">
    <text evidence="2">Monomer and homodimer.</text>
</comment>
<comment type="similarity">
    <text evidence="2">Belongs to the 2'-deoxynucleoside 5'-phosphate N-hydrolase 1 family.</text>
</comment>